<sequence length="128" mass="14067">MGLIWGLFSVIIASVAQLSLGFAASHLPPMTHLWDFIAALLAFGLDARILLLGLLGYLLSVFCWYKTLHKLALSKAYALLSMSYVLVWIASMVLPGWEGTFSLKALLGVACIMSGLMLIFLPTTKQRY</sequence>
<evidence type="ECO:0000255" key="1">
    <source>
        <dbReference type="HAMAP-Rule" id="MF_00538"/>
    </source>
</evidence>
<evidence type="ECO:0000305" key="2"/>
<organism>
    <name type="scientific">Shigella boydii serotype 4 (strain Sb227)</name>
    <dbReference type="NCBI Taxonomy" id="300268"/>
    <lineage>
        <taxon>Bacteria</taxon>
        <taxon>Pseudomonadati</taxon>
        <taxon>Pseudomonadota</taxon>
        <taxon>Gammaproteobacteria</taxon>
        <taxon>Enterobacterales</taxon>
        <taxon>Enterobacteriaceae</taxon>
        <taxon>Shigella</taxon>
    </lineage>
</organism>
<gene>
    <name evidence="1" type="primary">arnF</name>
    <name type="ordered locus">SBO_2295</name>
</gene>
<dbReference type="EMBL" id="CP000036">
    <property type="protein sequence ID" value="ABB66859.1"/>
    <property type="status" value="ALT_INIT"/>
    <property type="molecule type" value="Genomic_DNA"/>
</dbReference>
<dbReference type="RefSeq" id="WP_000523005.1">
    <property type="nucleotide sequence ID" value="NC_007613.1"/>
</dbReference>
<dbReference type="GeneID" id="75205691"/>
<dbReference type="KEGG" id="sbo:SBO_2295"/>
<dbReference type="HOGENOM" id="CLU_1243704_0_0_6"/>
<dbReference type="UniPathway" id="UPA00030"/>
<dbReference type="Proteomes" id="UP000007067">
    <property type="component" value="Chromosome"/>
</dbReference>
<dbReference type="GO" id="GO:0005886">
    <property type="term" value="C:plasma membrane"/>
    <property type="evidence" value="ECO:0007669"/>
    <property type="project" value="UniProtKB-SubCell"/>
</dbReference>
<dbReference type="GO" id="GO:1901505">
    <property type="term" value="F:carbohydrate derivative transmembrane transporter activity"/>
    <property type="evidence" value="ECO:0007669"/>
    <property type="project" value="InterPro"/>
</dbReference>
<dbReference type="GO" id="GO:0009245">
    <property type="term" value="P:lipid A biosynthetic process"/>
    <property type="evidence" value="ECO:0007669"/>
    <property type="project" value="UniProtKB-UniRule"/>
</dbReference>
<dbReference type="GO" id="GO:0009103">
    <property type="term" value="P:lipopolysaccharide biosynthetic process"/>
    <property type="evidence" value="ECO:0007669"/>
    <property type="project" value="UniProtKB-UniRule"/>
</dbReference>
<dbReference type="FunFam" id="1.10.3730.20:FF:000003">
    <property type="entry name" value="Probable 4-amino-4-deoxy-L-arabinose-phosphoundecaprenol flippase subunit ArnF"/>
    <property type="match status" value="1"/>
</dbReference>
<dbReference type="Gene3D" id="1.10.3730.20">
    <property type="match status" value="1"/>
</dbReference>
<dbReference type="HAMAP" id="MF_00538">
    <property type="entry name" value="Flippase_ArnF"/>
    <property type="match status" value="1"/>
</dbReference>
<dbReference type="InterPro" id="IPR022832">
    <property type="entry name" value="Flippase_ArnF"/>
</dbReference>
<dbReference type="InterPro" id="IPR000390">
    <property type="entry name" value="Small_drug/metabolite_transptr"/>
</dbReference>
<dbReference type="NCBIfam" id="NF002816">
    <property type="entry name" value="PRK02971.1-2"/>
    <property type="match status" value="1"/>
</dbReference>
<dbReference type="PANTHER" id="PTHR30561:SF9">
    <property type="entry name" value="4-AMINO-4-DEOXY-L-ARABINOSE-PHOSPHOUNDECAPRENOL FLIPPASE SUBUNIT ARNF-RELATED"/>
    <property type="match status" value="1"/>
</dbReference>
<dbReference type="PANTHER" id="PTHR30561">
    <property type="entry name" value="SMR FAMILY PROTON-DEPENDENT DRUG EFFLUX TRANSPORTER SUGE"/>
    <property type="match status" value="1"/>
</dbReference>
<dbReference type="SUPFAM" id="SSF103481">
    <property type="entry name" value="Multidrug resistance efflux transporter EmrE"/>
    <property type="match status" value="1"/>
</dbReference>
<keyword id="KW-0997">Cell inner membrane</keyword>
<keyword id="KW-1003">Cell membrane</keyword>
<keyword id="KW-0441">Lipid A biosynthesis</keyword>
<keyword id="KW-0444">Lipid biosynthesis</keyword>
<keyword id="KW-0443">Lipid metabolism</keyword>
<keyword id="KW-0448">Lipopolysaccharide biosynthesis</keyword>
<keyword id="KW-0472">Membrane</keyword>
<keyword id="KW-0812">Transmembrane</keyword>
<keyword id="KW-1133">Transmembrane helix</keyword>
<keyword id="KW-0813">Transport</keyword>
<comment type="function">
    <text evidence="1">Translocates 4-amino-4-deoxy-L-arabinose-phosphoundecaprenol (alpha-L-Ara4N-phosphoundecaprenol) from the cytoplasmic to the periplasmic side of the inner membrane.</text>
</comment>
<comment type="pathway">
    <text evidence="1">Bacterial outer membrane biogenesis; lipopolysaccharide biosynthesis.</text>
</comment>
<comment type="subunit">
    <text evidence="1">Heterodimer of ArnE and ArnF.</text>
</comment>
<comment type="subcellular location">
    <subcellularLocation>
        <location evidence="1">Cell inner membrane</location>
        <topology evidence="1">Multi-pass membrane protein</topology>
    </subcellularLocation>
</comment>
<comment type="similarity">
    <text evidence="1">Belongs to the ArnF family.</text>
</comment>
<comment type="sequence caution" evidence="2">
    <conflict type="erroneous initiation">
        <sequence resource="EMBL-CDS" id="ABB66859"/>
    </conflict>
</comment>
<name>ARNF_SHIBS</name>
<accession>Q31YJ9</accession>
<reference key="1">
    <citation type="journal article" date="2005" name="Nucleic Acids Res.">
        <title>Genome dynamics and diversity of Shigella species, the etiologic agents of bacillary dysentery.</title>
        <authorList>
            <person name="Yang F."/>
            <person name="Yang J."/>
            <person name="Zhang X."/>
            <person name="Chen L."/>
            <person name="Jiang Y."/>
            <person name="Yan Y."/>
            <person name="Tang X."/>
            <person name="Wang J."/>
            <person name="Xiong Z."/>
            <person name="Dong J."/>
            <person name="Xue Y."/>
            <person name="Zhu Y."/>
            <person name="Xu X."/>
            <person name="Sun L."/>
            <person name="Chen S."/>
            <person name="Nie H."/>
            <person name="Peng J."/>
            <person name="Xu J."/>
            <person name="Wang Y."/>
            <person name="Yuan Z."/>
            <person name="Wen Y."/>
            <person name="Yao Z."/>
            <person name="Shen Y."/>
            <person name="Qiang B."/>
            <person name="Hou Y."/>
            <person name="Yu J."/>
            <person name="Jin Q."/>
        </authorList>
    </citation>
    <scope>NUCLEOTIDE SEQUENCE [LARGE SCALE GENOMIC DNA]</scope>
    <source>
        <strain>Sb227</strain>
    </source>
</reference>
<protein>
    <recommendedName>
        <fullName evidence="1">Probable 4-amino-4-deoxy-L-arabinose-phosphoundecaprenol flippase subunit ArnF</fullName>
        <shortName evidence="1">L-Ara4N-phosphoundecaprenol flippase subunit ArnF</shortName>
    </recommendedName>
    <alternativeName>
        <fullName evidence="1">Undecaprenyl phosphate-aminoarabinose flippase subunit ArnF</fullName>
    </alternativeName>
</protein>
<proteinExistence type="inferred from homology"/>
<feature type="chain" id="PRO_0000382018" description="Probable 4-amino-4-deoxy-L-arabinose-phosphoundecaprenol flippase subunit ArnF">
    <location>
        <begin position="1"/>
        <end position="128"/>
    </location>
</feature>
<feature type="topological domain" description="Cytoplasmic" evidence="1">
    <location>
        <begin position="1"/>
        <end position="2"/>
    </location>
</feature>
<feature type="transmembrane region" description="Helical" evidence="1">
    <location>
        <begin position="3"/>
        <end position="23"/>
    </location>
</feature>
<feature type="topological domain" description="Periplasmic" evidence="1">
    <location>
        <begin position="24"/>
        <end position="35"/>
    </location>
</feature>
<feature type="transmembrane region" description="Helical" evidence="1">
    <location>
        <begin position="36"/>
        <end position="56"/>
    </location>
</feature>
<feature type="topological domain" description="Cytoplasmic" evidence="1">
    <location>
        <begin position="57"/>
        <end position="76"/>
    </location>
</feature>
<feature type="transmembrane region" description="Helical" evidence="1">
    <location>
        <begin position="77"/>
        <end position="97"/>
    </location>
</feature>
<feature type="topological domain" description="Periplasmic" evidence="1">
    <location>
        <begin position="98"/>
        <end position="100"/>
    </location>
</feature>
<feature type="transmembrane region" description="Helical" evidence="1">
    <location>
        <begin position="101"/>
        <end position="121"/>
    </location>
</feature>
<feature type="topological domain" description="Cytoplasmic" evidence="1">
    <location>
        <begin position="122"/>
        <end position="128"/>
    </location>
</feature>